<feature type="chain" id="PRO_0000209685" description="2-keto-3-deoxygluconate permease">
    <location>
        <begin position="1"/>
        <end position="318"/>
    </location>
</feature>
<feature type="transmembrane region" description="Helical" evidence="1">
    <location>
        <begin position="10"/>
        <end position="30"/>
    </location>
</feature>
<feature type="transmembrane region" description="Helical" evidence="1">
    <location>
        <begin position="42"/>
        <end position="62"/>
    </location>
</feature>
<feature type="transmembrane region" description="Helical" evidence="1">
    <location>
        <begin position="82"/>
        <end position="102"/>
    </location>
</feature>
<feature type="transmembrane region" description="Helical" evidence="1">
    <location>
        <begin position="109"/>
        <end position="129"/>
    </location>
</feature>
<feature type="transmembrane region" description="Helical" evidence="1">
    <location>
        <begin position="139"/>
        <end position="159"/>
    </location>
</feature>
<feature type="transmembrane region" description="Helical" evidence="1">
    <location>
        <begin position="163"/>
        <end position="183"/>
    </location>
</feature>
<feature type="transmembrane region" description="Helical" evidence="1">
    <location>
        <begin position="201"/>
        <end position="221"/>
    </location>
</feature>
<feature type="transmembrane region" description="Helical" evidence="1">
    <location>
        <begin position="224"/>
        <end position="244"/>
    </location>
</feature>
<feature type="transmembrane region" description="Helical" evidence="1">
    <location>
        <begin position="257"/>
        <end position="277"/>
    </location>
</feature>
<feature type="transmembrane region" description="Helical" evidence="1">
    <location>
        <begin position="289"/>
        <end position="309"/>
    </location>
</feature>
<dbReference type="EMBL" id="AE008923">
    <property type="protein sequence ID" value="AAM35229.1"/>
    <property type="molecule type" value="Genomic_DNA"/>
</dbReference>
<dbReference type="RefSeq" id="WP_005915223.1">
    <property type="nucleotide sequence ID" value="NC_003919.1"/>
</dbReference>
<dbReference type="GeneID" id="66909550"/>
<dbReference type="KEGG" id="xac:XAC0337"/>
<dbReference type="eggNOG" id="ENOG502Z7JT">
    <property type="taxonomic scope" value="Bacteria"/>
</dbReference>
<dbReference type="HOGENOM" id="CLU_057476_0_1_6"/>
<dbReference type="Proteomes" id="UP000000576">
    <property type="component" value="Chromosome"/>
</dbReference>
<dbReference type="GO" id="GO:0005886">
    <property type="term" value="C:plasma membrane"/>
    <property type="evidence" value="ECO:0007669"/>
    <property type="project" value="UniProtKB-SubCell"/>
</dbReference>
<dbReference type="GO" id="GO:0015649">
    <property type="term" value="F:2-keto-3-deoxygluconate:proton symporter activity"/>
    <property type="evidence" value="ECO:0007669"/>
    <property type="project" value="UniProtKB-UniRule"/>
</dbReference>
<dbReference type="HAMAP" id="MF_00070">
    <property type="entry name" value="KdgT"/>
    <property type="match status" value="1"/>
</dbReference>
<dbReference type="InterPro" id="IPR004684">
    <property type="entry name" value="2keto-3dGluconate_permease"/>
</dbReference>
<dbReference type="InterPro" id="IPR018395">
    <property type="entry name" value="2keto-3dGluconate_permease_sub"/>
</dbReference>
<dbReference type="NCBIfam" id="TIGR00793">
    <property type="entry name" value="kdgT"/>
    <property type="match status" value="1"/>
</dbReference>
<dbReference type="Pfam" id="PF03812">
    <property type="entry name" value="KdgT"/>
    <property type="match status" value="1"/>
</dbReference>
<organism>
    <name type="scientific">Xanthomonas axonopodis pv. citri (strain 306)</name>
    <dbReference type="NCBI Taxonomy" id="190486"/>
    <lineage>
        <taxon>Bacteria</taxon>
        <taxon>Pseudomonadati</taxon>
        <taxon>Pseudomonadota</taxon>
        <taxon>Gammaproteobacteria</taxon>
        <taxon>Lysobacterales</taxon>
        <taxon>Lysobacteraceae</taxon>
        <taxon>Xanthomonas</taxon>
    </lineage>
</organism>
<accession>Q8PQI6</accession>
<name>KDGT_XANAC</name>
<protein>
    <recommendedName>
        <fullName evidence="1">2-keto-3-deoxygluconate permease</fullName>
        <shortName evidence="1">KDG permease</shortName>
    </recommendedName>
</protein>
<evidence type="ECO:0000255" key="1">
    <source>
        <dbReference type="HAMAP-Rule" id="MF_00070"/>
    </source>
</evidence>
<keyword id="KW-0997">Cell inner membrane</keyword>
<keyword id="KW-1003">Cell membrane</keyword>
<keyword id="KW-0472">Membrane</keyword>
<keyword id="KW-0762">Sugar transport</keyword>
<keyword id="KW-0769">Symport</keyword>
<keyword id="KW-0812">Transmembrane</keyword>
<keyword id="KW-1133">Transmembrane helix</keyword>
<keyword id="KW-0813">Transport</keyword>
<comment type="function">
    <text evidence="1">Catalyzes the proton-dependent uptake of 2-keto-3-deoxygluconate (KDG) into the cell.</text>
</comment>
<comment type="catalytic activity">
    <reaction evidence="1">
        <text>2-dehydro-3-deoxy-D-gluconate(in) + H(+)(in) = 2-dehydro-3-deoxy-D-gluconate(out) + H(+)(out)</text>
        <dbReference type="Rhea" id="RHEA:29943"/>
        <dbReference type="ChEBI" id="CHEBI:15378"/>
        <dbReference type="ChEBI" id="CHEBI:57990"/>
    </reaction>
    <physiologicalReaction direction="right-to-left" evidence="1">
        <dbReference type="Rhea" id="RHEA:29945"/>
    </physiologicalReaction>
</comment>
<comment type="subcellular location">
    <subcellularLocation>
        <location evidence="1">Cell inner membrane</location>
        <topology evidence="1">Multi-pass membrane protein</topology>
    </subcellularLocation>
</comment>
<comment type="similarity">
    <text evidence="1">Belongs to the KdgT transporter family.</text>
</comment>
<reference key="1">
    <citation type="journal article" date="2002" name="Nature">
        <title>Comparison of the genomes of two Xanthomonas pathogens with differing host specificities.</title>
        <authorList>
            <person name="da Silva A.C.R."/>
            <person name="Ferro J.A."/>
            <person name="Reinach F.C."/>
            <person name="Farah C.S."/>
            <person name="Furlan L.R."/>
            <person name="Quaggio R.B."/>
            <person name="Monteiro-Vitorello C.B."/>
            <person name="Van Sluys M.A."/>
            <person name="Almeida N.F. Jr."/>
            <person name="Alves L.M.C."/>
            <person name="do Amaral A.M."/>
            <person name="Bertolini M.C."/>
            <person name="Camargo L.E.A."/>
            <person name="Camarotte G."/>
            <person name="Cannavan F."/>
            <person name="Cardozo J."/>
            <person name="Chambergo F."/>
            <person name="Ciapina L.P."/>
            <person name="Cicarelli R.M.B."/>
            <person name="Coutinho L.L."/>
            <person name="Cursino-Santos J.R."/>
            <person name="El-Dorry H."/>
            <person name="Faria J.B."/>
            <person name="Ferreira A.J.S."/>
            <person name="Ferreira R.C.C."/>
            <person name="Ferro M.I.T."/>
            <person name="Formighieri E.F."/>
            <person name="Franco M.C."/>
            <person name="Greggio C.C."/>
            <person name="Gruber A."/>
            <person name="Katsuyama A.M."/>
            <person name="Kishi L.T."/>
            <person name="Leite R.P."/>
            <person name="Lemos E.G.M."/>
            <person name="Lemos M.V.F."/>
            <person name="Locali E.C."/>
            <person name="Machado M.A."/>
            <person name="Madeira A.M.B.N."/>
            <person name="Martinez-Rossi N.M."/>
            <person name="Martins E.C."/>
            <person name="Meidanis J."/>
            <person name="Menck C.F.M."/>
            <person name="Miyaki C.Y."/>
            <person name="Moon D.H."/>
            <person name="Moreira L.M."/>
            <person name="Novo M.T.M."/>
            <person name="Okura V.K."/>
            <person name="Oliveira M.C."/>
            <person name="Oliveira V.R."/>
            <person name="Pereira H.A."/>
            <person name="Rossi A."/>
            <person name="Sena J.A.D."/>
            <person name="Silva C."/>
            <person name="de Souza R.F."/>
            <person name="Spinola L.A.F."/>
            <person name="Takita M.A."/>
            <person name="Tamura R.E."/>
            <person name="Teixeira E.C."/>
            <person name="Tezza R.I.D."/>
            <person name="Trindade dos Santos M."/>
            <person name="Truffi D."/>
            <person name="Tsai S.M."/>
            <person name="White F.F."/>
            <person name="Setubal J.C."/>
            <person name="Kitajima J.P."/>
        </authorList>
    </citation>
    <scope>NUCLEOTIDE SEQUENCE [LARGE SCALE GENOMIC DNA]</scope>
    <source>
        <strain>306</strain>
    </source>
</reference>
<sequence>MRIKATVERLPGGMMLVPLLLGALCHTLWPQAGSTLGSFSNGLISGTVPILAVWFFCMGATIQLRASGRVLRRSGSLVLTKIAVAWLVAVLCAPLLPIGGVSSGPLAGLSVLALVAAMDMTNGGLYAALMQQYGSSEDAGAVVLMSLESGPLISMLILGASGLASFEPQLFVGAVLPLLLGFALGNLDAELRQFFAQATKTLVPFFGFALGNTLDLSTIAHTGTSGVLLGVAVVVITGLPLLLADRWIGGGNGTAGVAASSTAGAAVATPALIAGMAPQFAPAAPAATALVASAVIVTSLLVPLLTALYARRGDARSG</sequence>
<proteinExistence type="inferred from homology"/>
<gene>
    <name evidence="1" type="primary">kdgT</name>
    <name type="ordered locus">XAC0337</name>
</gene>